<accession>B1ZGS8</accession>
<evidence type="ECO:0000255" key="1">
    <source>
        <dbReference type="HAMAP-Rule" id="MF_01343"/>
    </source>
</evidence>
<evidence type="ECO:0000305" key="2"/>
<gene>
    <name evidence="1" type="primary">rpsO</name>
    <name type="ordered locus">Mpop_4508</name>
</gene>
<proteinExistence type="inferred from homology"/>
<dbReference type="EMBL" id="CP001029">
    <property type="protein sequence ID" value="ACB82606.1"/>
    <property type="molecule type" value="Genomic_DNA"/>
</dbReference>
<dbReference type="RefSeq" id="WP_009864833.1">
    <property type="nucleotide sequence ID" value="NC_010725.1"/>
</dbReference>
<dbReference type="SMR" id="B1ZGS8"/>
<dbReference type="STRING" id="441620.Mpop_4508"/>
<dbReference type="KEGG" id="mpo:Mpop_4508"/>
<dbReference type="eggNOG" id="COG0184">
    <property type="taxonomic scope" value="Bacteria"/>
</dbReference>
<dbReference type="HOGENOM" id="CLU_148518_0_0_5"/>
<dbReference type="OrthoDB" id="9799262at2"/>
<dbReference type="Proteomes" id="UP000007136">
    <property type="component" value="Chromosome"/>
</dbReference>
<dbReference type="GO" id="GO:0022627">
    <property type="term" value="C:cytosolic small ribosomal subunit"/>
    <property type="evidence" value="ECO:0007669"/>
    <property type="project" value="TreeGrafter"/>
</dbReference>
<dbReference type="GO" id="GO:0019843">
    <property type="term" value="F:rRNA binding"/>
    <property type="evidence" value="ECO:0007669"/>
    <property type="project" value="UniProtKB-UniRule"/>
</dbReference>
<dbReference type="GO" id="GO:0003735">
    <property type="term" value="F:structural constituent of ribosome"/>
    <property type="evidence" value="ECO:0007669"/>
    <property type="project" value="InterPro"/>
</dbReference>
<dbReference type="GO" id="GO:0006412">
    <property type="term" value="P:translation"/>
    <property type="evidence" value="ECO:0007669"/>
    <property type="project" value="UniProtKB-UniRule"/>
</dbReference>
<dbReference type="CDD" id="cd00353">
    <property type="entry name" value="Ribosomal_S15p_S13e"/>
    <property type="match status" value="1"/>
</dbReference>
<dbReference type="FunFam" id="1.10.287.10:FF:000002">
    <property type="entry name" value="30S ribosomal protein S15"/>
    <property type="match status" value="1"/>
</dbReference>
<dbReference type="Gene3D" id="6.10.250.3130">
    <property type="match status" value="1"/>
</dbReference>
<dbReference type="Gene3D" id="1.10.287.10">
    <property type="entry name" value="S15/NS1, RNA-binding"/>
    <property type="match status" value="1"/>
</dbReference>
<dbReference type="HAMAP" id="MF_01343_B">
    <property type="entry name" value="Ribosomal_uS15_B"/>
    <property type="match status" value="1"/>
</dbReference>
<dbReference type="InterPro" id="IPR000589">
    <property type="entry name" value="Ribosomal_uS15"/>
</dbReference>
<dbReference type="InterPro" id="IPR005290">
    <property type="entry name" value="Ribosomal_uS15_bac-type"/>
</dbReference>
<dbReference type="InterPro" id="IPR009068">
    <property type="entry name" value="uS15_NS1_RNA-bd_sf"/>
</dbReference>
<dbReference type="NCBIfam" id="TIGR00952">
    <property type="entry name" value="S15_bact"/>
    <property type="match status" value="1"/>
</dbReference>
<dbReference type="PANTHER" id="PTHR23321">
    <property type="entry name" value="RIBOSOMAL PROTEIN S15, BACTERIAL AND ORGANELLAR"/>
    <property type="match status" value="1"/>
</dbReference>
<dbReference type="PANTHER" id="PTHR23321:SF26">
    <property type="entry name" value="SMALL RIBOSOMAL SUBUNIT PROTEIN US15M"/>
    <property type="match status" value="1"/>
</dbReference>
<dbReference type="Pfam" id="PF00312">
    <property type="entry name" value="Ribosomal_S15"/>
    <property type="match status" value="1"/>
</dbReference>
<dbReference type="SMART" id="SM01387">
    <property type="entry name" value="Ribosomal_S15"/>
    <property type="match status" value="1"/>
</dbReference>
<dbReference type="SUPFAM" id="SSF47060">
    <property type="entry name" value="S15/NS1 RNA-binding domain"/>
    <property type="match status" value="1"/>
</dbReference>
<dbReference type="PROSITE" id="PS00362">
    <property type="entry name" value="RIBOSOMAL_S15"/>
    <property type="match status" value="1"/>
</dbReference>
<reference key="1">
    <citation type="submission" date="2008-04" db="EMBL/GenBank/DDBJ databases">
        <title>Complete sequence of chromosome of Methylobacterium populi BJ001.</title>
        <authorList>
            <consortium name="US DOE Joint Genome Institute"/>
            <person name="Copeland A."/>
            <person name="Lucas S."/>
            <person name="Lapidus A."/>
            <person name="Glavina del Rio T."/>
            <person name="Dalin E."/>
            <person name="Tice H."/>
            <person name="Bruce D."/>
            <person name="Goodwin L."/>
            <person name="Pitluck S."/>
            <person name="Chertkov O."/>
            <person name="Brettin T."/>
            <person name="Detter J.C."/>
            <person name="Han C."/>
            <person name="Kuske C.R."/>
            <person name="Schmutz J."/>
            <person name="Larimer F."/>
            <person name="Land M."/>
            <person name="Hauser L."/>
            <person name="Kyrpides N."/>
            <person name="Mikhailova N."/>
            <person name="Marx C."/>
            <person name="Richardson P."/>
        </authorList>
    </citation>
    <scope>NUCLEOTIDE SEQUENCE [LARGE SCALE GENOMIC DNA]</scope>
    <source>
        <strain>ATCC BAA-705 / NCIMB 13946 / BJ001</strain>
    </source>
</reference>
<name>RS15_METPB</name>
<protein>
    <recommendedName>
        <fullName evidence="1">Small ribosomal subunit protein uS15</fullName>
    </recommendedName>
    <alternativeName>
        <fullName evidence="2">30S ribosomal protein S15</fullName>
    </alternativeName>
</protein>
<sequence length="89" mass="10361">MSITAERKTALIKEYAKGNKDTGSPEVQIAILTERITNLTAHFKTHGKDNHSRRGLLKLVSQRRSLLDYLKRKEEARYRTLIERLGIRR</sequence>
<organism>
    <name type="scientific">Methylorubrum populi (strain ATCC BAA-705 / NCIMB 13946 / BJ001)</name>
    <name type="common">Methylobacterium populi</name>
    <dbReference type="NCBI Taxonomy" id="441620"/>
    <lineage>
        <taxon>Bacteria</taxon>
        <taxon>Pseudomonadati</taxon>
        <taxon>Pseudomonadota</taxon>
        <taxon>Alphaproteobacteria</taxon>
        <taxon>Hyphomicrobiales</taxon>
        <taxon>Methylobacteriaceae</taxon>
        <taxon>Methylorubrum</taxon>
    </lineage>
</organism>
<feature type="chain" id="PRO_1000143139" description="Small ribosomal subunit protein uS15">
    <location>
        <begin position="1"/>
        <end position="89"/>
    </location>
</feature>
<comment type="function">
    <text evidence="1">One of the primary rRNA binding proteins, it binds directly to 16S rRNA where it helps nucleate assembly of the platform of the 30S subunit by binding and bridging several RNA helices of the 16S rRNA.</text>
</comment>
<comment type="function">
    <text evidence="1">Forms an intersubunit bridge (bridge B4) with the 23S rRNA of the 50S subunit in the ribosome.</text>
</comment>
<comment type="subunit">
    <text evidence="1">Part of the 30S ribosomal subunit. Forms a bridge to the 50S subunit in the 70S ribosome, contacting the 23S rRNA.</text>
</comment>
<comment type="similarity">
    <text evidence="1">Belongs to the universal ribosomal protein uS15 family.</text>
</comment>
<keyword id="KW-0687">Ribonucleoprotein</keyword>
<keyword id="KW-0689">Ribosomal protein</keyword>
<keyword id="KW-0694">RNA-binding</keyword>
<keyword id="KW-0699">rRNA-binding</keyword>